<protein>
    <recommendedName>
        <fullName>UPF0122 protein spyM18_1152</fullName>
    </recommendedName>
</protein>
<accession>P67255</accession>
<accession>Q99ZK0</accession>
<comment type="function">
    <text evidence="1">Might take part in the signal recognition particle (SRP) pathway. This is inferred from the conservation of its genetic proximity to ftsY/ffh. May be a regulatory protein (By similarity).</text>
</comment>
<comment type="similarity">
    <text evidence="2">Belongs to the UPF0122 family.</text>
</comment>
<sequence>MNIMEIEKTNRMNALFEFYAALLTDKQMNYIELYYADDYSLAEIADEFGVSRQAVYDNIKRTEKILETYEMKLHMYSDYVVRSEIFDDMIAHYPHDEYLQEKISILTSIDNRE</sequence>
<evidence type="ECO:0000250" key="1"/>
<evidence type="ECO:0000305" key="2"/>
<feature type="chain" id="PRO_0000211891" description="UPF0122 protein spyM18_1152">
    <location>
        <begin position="1"/>
        <end position="113"/>
    </location>
</feature>
<dbReference type="EMBL" id="AE009949">
    <property type="protein sequence ID" value="AAL97768.1"/>
    <property type="molecule type" value="Genomic_DNA"/>
</dbReference>
<dbReference type="SMR" id="P67255"/>
<dbReference type="KEGG" id="spm:spyM18_1152"/>
<dbReference type="HOGENOM" id="CLU_129218_1_1_9"/>
<dbReference type="Gene3D" id="1.10.10.10">
    <property type="entry name" value="Winged helix-like DNA-binding domain superfamily/Winged helix DNA-binding domain"/>
    <property type="match status" value="1"/>
</dbReference>
<dbReference type="HAMAP" id="MF_00245">
    <property type="entry name" value="UPF0122"/>
    <property type="match status" value="1"/>
</dbReference>
<dbReference type="InterPro" id="IPR013324">
    <property type="entry name" value="RNA_pol_sigma_r3/r4-like"/>
</dbReference>
<dbReference type="InterPro" id="IPR007394">
    <property type="entry name" value="UPF0122"/>
</dbReference>
<dbReference type="InterPro" id="IPR054831">
    <property type="entry name" value="UPF0122_fam_protein"/>
</dbReference>
<dbReference type="InterPro" id="IPR036388">
    <property type="entry name" value="WH-like_DNA-bd_sf"/>
</dbReference>
<dbReference type="NCBIfam" id="NF001066">
    <property type="entry name" value="PRK00118.1-1"/>
    <property type="match status" value="1"/>
</dbReference>
<dbReference type="NCBIfam" id="NF001068">
    <property type="entry name" value="PRK00118.1-4"/>
    <property type="match status" value="1"/>
</dbReference>
<dbReference type="NCBIfam" id="NF001070">
    <property type="entry name" value="PRK00118.1-6"/>
    <property type="match status" value="1"/>
</dbReference>
<dbReference type="NCBIfam" id="NF045758">
    <property type="entry name" value="YlxM"/>
    <property type="match status" value="1"/>
</dbReference>
<dbReference type="PANTHER" id="PTHR40083">
    <property type="entry name" value="UPF0122 PROTEIN CBO2450/CLC_2298"/>
    <property type="match status" value="1"/>
</dbReference>
<dbReference type="PANTHER" id="PTHR40083:SF1">
    <property type="entry name" value="UPF0122 PROTEIN YLXM"/>
    <property type="match status" value="1"/>
</dbReference>
<dbReference type="Pfam" id="PF04297">
    <property type="entry name" value="UPF0122"/>
    <property type="match status" value="1"/>
</dbReference>
<dbReference type="SUPFAM" id="SSF88659">
    <property type="entry name" value="Sigma3 and sigma4 domains of RNA polymerase sigma factors"/>
    <property type="match status" value="1"/>
</dbReference>
<gene>
    <name type="ordered locus">spyM18_1152</name>
</gene>
<reference key="1">
    <citation type="journal article" date="2002" name="Proc. Natl. Acad. Sci. U.S.A.">
        <title>Genome sequence and comparative microarray analysis of serotype M18 group A Streptococcus strains associated with acute rheumatic fever outbreaks.</title>
        <authorList>
            <person name="Smoot J.C."/>
            <person name="Barbian K.D."/>
            <person name="Van Gompel J.J."/>
            <person name="Smoot L.M."/>
            <person name="Chaussee M.S."/>
            <person name="Sylva G.L."/>
            <person name="Sturdevant D.E."/>
            <person name="Ricklefs S.M."/>
            <person name="Porcella S.F."/>
            <person name="Parkins L.D."/>
            <person name="Beres S.B."/>
            <person name="Campbell D.S."/>
            <person name="Smith T.M."/>
            <person name="Zhang Q."/>
            <person name="Kapur V."/>
            <person name="Daly J.A."/>
            <person name="Veasy L.G."/>
            <person name="Musser J.M."/>
        </authorList>
    </citation>
    <scope>NUCLEOTIDE SEQUENCE [LARGE SCALE GENOMIC DNA]</scope>
    <source>
        <strain>MGAS8232</strain>
    </source>
</reference>
<organism>
    <name type="scientific">Streptococcus pyogenes serotype M18 (strain MGAS8232)</name>
    <dbReference type="NCBI Taxonomy" id="186103"/>
    <lineage>
        <taxon>Bacteria</taxon>
        <taxon>Bacillati</taxon>
        <taxon>Bacillota</taxon>
        <taxon>Bacilli</taxon>
        <taxon>Lactobacillales</taxon>
        <taxon>Streptococcaceae</taxon>
        <taxon>Streptococcus</taxon>
    </lineage>
</organism>
<name>Y1152_STRP8</name>
<proteinExistence type="inferred from homology"/>